<gene>
    <name evidence="1" type="primary">L3</name>
</gene>
<evidence type="ECO:0000255" key="1">
    <source>
        <dbReference type="HAMAP-Rule" id="MF_04059"/>
    </source>
</evidence>
<comment type="function">
    <text evidence="1">Cleaves viral precursor proteins (pTP, pIIIa, pVI, pVII, pVIII, and pX) inside newly assembled particles giving rise to mature virions. Protease complexed to its cofactor slides along the viral DNA to specifically locate and cleave the viral precursors. Mature virions have a weakened organization compared to the unmature virions, thereby facilitating subsequent uncoating. Without maturation, the particle lacks infectivity and is unable to uncoat. Late in adenovirus infection, in the cytoplasm, may participate in the cytoskeleton destruction. Cleaves host cell cytoskeletal keratins K7 and K18.</text>
</comment>
<comment type="catalytic activity">
    <reaction evidence="1">
        <text>Cleaves proteins of the adenovirus and its host cell at two consensus sites: -Yaa-Xaa-Gly-Gly-|-Xaa- and -Yaa-Xaa-Gly-Xaa-|-Gly- (in which Yaa is Met, Ile or Leu, and Xaa is any amino acid).</text>
        <dbReference type="EC" id="3.4.22.39"/>
    </reaction>
</comment>
<comment type="activity regulation">
    <text evidence="1">Requires DNA and protease cofactor for maximal activation. Inside nascent virions, becomes partially activated by binding to the viral DNA, allowing it to cleave the cofactor that binds to the protease and fully activates it. Actin, like the viral protease cofactor, seems to act as a cofactor in the cleavage of cytokeratin 18 and of actin itself.</text>
</comment>
<comment type="subunit">
    <text evidence="1">Interacts with protease cofactor pVI-C; this interaction is necessary for protease activation.</text>
</comment>
<comment type="subcellular location">
    <subcellularLocation>
        <location evidence="1">Virion</location>
    </subcellularLocation>
    <subcellularLocation>
        <location evidence="1">Host nucleus</location>
    </subcellularLocation>
    <text evidence="1">Present in about 10 copies per virion.</text>
</comment>
<comment type="induction">
    <text evidence="1">Expressed in the late phase of the viral replicative cycle.</text>
</comment>
<comment type="miscellaneous">
    <text evidence="1">All late proteins expressed from the major late promoter are produced by alternative splicing and alternative polyadenylation of the same gene giving rise to non-overlapping ORFs. A leader sequence is present in the N-terminus of all these mRNAs and is recognized by the viral shutoff protein to provide expression although conventional translation via ribosome scanning from the cap has been shut off in the host cell.</text>
</comment>
<comment type="similarity">
    <text evidence="1">Belongs to the peptidase C5 family.</text>
</comment>
<organismHost>
    <name type="scientific">Galliformes</name>
    <dbReference type="NCBI Taxonomy" id="8976"/>
</organismHost>
<protein>
    <recommendedName>
        <fullName evidence="1">Protease</fullName>
        <ecNumber evidence="1">3.4.22.39</ecNumber>
    </recommendedName>
    <alternativeName>
        <fullName evidence="1">Adenain</fullName>
    </alternativeName>
    <alternativeName>
        <fullName evidence="1">Adenovirus protease</fullName>
        <shortName evidence="1">AVP</shortName>
    </alternativeName>
    <alternativeName>
        <fullName evidence="1">Adenovirus proteinase</fullName>
    </alternativeName>
    <alternativeName>
        <fullName evidence="1">Endoprotease</fullName>
    </alternativeName>
</protein>
<reference key="1">
    <citation type="submission" date="1999-11" db="EMBL/GenBank/DDBJ databases">
        <title>The DNA sequence of fowl adenovirus 8.</title>
        <authorList>
            <person name="Ojkic D."/>
            <person name="Nagy E."/>
        </authorList>
    </citation>
    <scope>NUCLEOTIDE SEQUENCE [LARGE SCALE GENOMIC DNA]</scope>
</reference>
<keyword id="KW-0068">Autocatalytic cleavage</keyword>
<keyword id="KW-1015">Disulfide bond</keyword>
<keyword id="KW-0238">DNA-binding</keyword>
<keyword id="KW-1048">Host nucleus</keyword>
<keyword id="KW-0378">Hydrolase</keyword>
<keyword id="KW-0426">Late protein</keyword>
<keyword id="KW-0645">Protease</keyword>
<keyword id="KW-1185">Reference proteome</keyword>
<keyword id="KW-0788">Thiol protease</keyword>
<keyword id="KW-0946">Virion</keyword>
<organism>
    <name type="scientific">Avian adenovirus 8 (strain ATCC A-2A)</name>
    <name type="common">FAdV-8</name>
    <name type="synonym">Fowl adenovirus 8</name>
    <dbReference type="NCBI Taxonomy" id="66295"/>
    <lineage>
        <taxon>Viruses</taxon>
        <taxon>Varidnaviria</taxon>
        <taxon>Bamfordvirae</taxon>
        <taxon>Preplasmiviricota</taxon>
        <taxon>Tectiliviricetes</taxon>
        <taxon>Rowavirales</taxon>
        <taxon>Adenoviridae</taxon>
        <taxon>Aviadenovirus</taxon>
        <taxon>Fowl aviadenovirus E</taxon>
    </lineage>
</organism>
<feature type="chain" id="PRO_0000218044" description="Protease">
    <location>
        <begin position="1"/>
        <end position="205"/>
    </location>
</feature>
<feature type="active site" evidence="1">
    <location>
        <position position="55"/>
    </location>
</feature>
<feature type="active site" evidence="1">
    <location>
        <position position="72"/>
    </location>
</feature>
<feature type="active site" evidence="1">
    <location>
        <position position="122"/>
    </location>
</feature>
<feature type="site" description="Cleavage; by autolysis" evidence="1">
    <location>
        <begin position="52"/>
        <end position="53"/>
    </location>
</feature>
<feature type="disulfide bond" description="Interchain (with C-10 in cleaved protease cofactor pVI-C)" evidence="1">
    <location>
        <position position="104"/>
    </location>
</feature>
<accession>Q9QM72</accession>
<dbReference type="EC" id="3.4.22.39" evidence="1"/>
<dbReference type="EMBL" id="AF083975">
    <property type="protein sequence ID" value="AAD50345.2"/>
    <property type="molecule type" value="Genomic_DNA"/>
</dbReference>
<dbReference type="SMR" id="Q9QM72"/>
<dbReference type="MEROPS" id="C05.001"/>
<dbReference type="KEGG" id="vg:1476592"/>
<dbReference type="Proteomes" id="UP000143664">
    <property type="component" value="Segment"/>
</dbReference>
<dbReference type="GO" id="GO:0042025">
    <property type="term" value="C:host cell nucleus"/>
    <property type="evidence" value="ECO:0007669"/>
    <property type="project" value="UniProtKB-SubCell"/>
</dbReference>
<dbReference type="GO" id="GO:0044423">
    <property type="term" value="C:virion component"/>
    <property type="evidence" value="ECO:0007669"/>
    <property type="project" value="UniProtKB-UniRule"/>
</dbReference>
<dbReference type="GO" id="GO:0004197">
    <property type="term" value="F:cysteine-type endopeptidase activity"/>
    <property type="evidence" value="ECO:0007669"/>
    <property type="project" value="UniProtKB-UniRule"/>
</dbReference>
<dbReference type="GO" id="GO:0003677">
    <property type="term" value="F:DNA binding"/>
    <property type="evidence" value="ECO:0007669"/>
    <property type="project" value="UniProtKB-UniRule"/>
</dbReference>
<dbReference type="GO" id="GO:0006508">
    <property type="term" value="P:proteolysis"/>
    <property type="evidence" value="ECO:0007669"/>
    <property type="project" value="UniProtKB-KW"/>
</dbReference>
<dbReference type="Gene3D" id="3.40.395.10">
    <property type="entry name" value="Adenoviral Proteinase, Chain A"/>
    <property type="match status" value="1"/>
</dbReference>
<dbReference type="HAMAP" id="MF_04059">
    <property type="entry name" value="ADV_PRO"/>
    <property type="match status" value="1"/>
</dbReference>
<dbReference type="InterPro" id="IPR038765">
    <property type="entry name" value="Papain-like_cys_pep_sf"/>
</dbReference>
<dbReference type="InterPro" id="IPR000855">
    <property type="entry name" value="Peptidase_C5"/>
</dbReference>
<dbReference type="Pfam" id="PF00770">
    <property type="entry name" value="Peptidase_C5"/>
    <property type="match status" value="1"/>
</dbReference>
<dbReference type="PIRSF" id="PIRSF001218">
    <property type="entry name" value="Protease_ADV"/>
    <property type="match status" value="1"/>
</dbReference>
<dbReference type="PRINTS" id="PR00703">
    <property type="entry name" value="ADVENDOPTASE"/>
</dbReference>
<dbReference type="SUPFAM" id="SSF54001">
    <property type="entry name" value="Cysteine proteinases"/>
    <property type="match status" value="1"/>
</dbReference>
<proteinExistence type="inferred from homology"/>
<sequence length="205" mass="23701">MSGTTESQLNQLVGAMHLRHRFLGVFDKTFPGFLDPNRPASAIVNTGSRATGGMHWIAFAFDPIARKCYMFDPFGWSDRELWNLYKVKYDAFLRRTGLRQPDKCFELVRSVEAVQCPCSAACGLFSALFIASFDRYHTRPMDGNPIIDTVVGVKHSDMYKPEFQSILHRNQERMYFWFMKNNSFFRAHESELKRETAINSVPENH</sequence>
<name>PRO_ADEG8</name>